<organism>
    <name type="scientific">Saccharomyces cerevisiae (strain ATCC 204508 / S288c)</name>
    <name type="common">Baker's yeast</name>
    <dbReference type="NCBI Taxonomy" id="559292"/>
    <lineage>
        <taxon>Eukaryota</taxon>
        <taxon>Fungi</taxon>
        <taxon>Dikarya</taxon>
        <taxon>Ascomycota</taxon>
        <taxon>Saccharomycotina</taxon>
        <taxon>Saccharomycetes</taxon>
        <taxon>Saccharomycetales</taxon>
        <taxon>Saccharomycetaceae</taxon>
        <taxon>Saccharomyces</taxon>
    </lineage>
</organism>
<dbReference type="EC" id="2.4.1.198"/>
<dbReference type="EMBL" id="U33007">
    <property type="protein sequence ID" value="AAB64854.1"/>
    <property type="molecule type" value="Genomic_DNA"/>
</dbReference>
<dbReference type="EMBL" id="BK006938">
    <property type="protein sequence ID" value="DAA12274.1"/>
    <property type="molecule type" value="Genomic_DNA"/>
</dbReference>
<dbReference type="PIR" id="S69717">
    <property type="entry name" value="S69717"/>
</dbReference>
<dbReference type="RefSeq" id="NP_010725.3">
    <property type="nucleotide sequence ID" value="NM_001180745.3"/>
</dbReference>
<dbReference type="SMR" id="Q04082"/>
<dbReference type="BioGRID" id="32493">
    <property type="interactions" value="702"/>
</dbReference>
<dbReference type="ComplexPortal" id="CPX-1274">
    <property type="entry name" value="Glycosylphosphatidylinositol-N-acetylglucosaminyltransferase complex"/>
</dbReference>
<dbReference type="FunCoup" id="Q04082">
    <property type="interactions" value="62"/>
</dbReference>
<dbReference type="IntAct" id="Q04082">
    <property type="interactions" value="14"/>
</dbReference>
<dbReference type="STRING" id="4932.YDR437W"/>
<dbReference type="PaxDb" id="4932-YDR437W"/>
<dbReference type="PeptideAtlas" id="Q04082"/>
<dbReference type="EnsemblFungi" id="YDR437W_mRNA">
    <property type="protein sequence ID" value="YDR437W"/>
    <property type="gene ID" value="YDR437W"/>
</dbReference>
<dbReference type="GeneID" id="852047"/>
<dbReference type="KEGG" id="sce:YDR437W"/>
<dbReference type="AGR" id="SGD:S000002845"/>
<dbReference type="SGD" id="S000002845">
    <property type="gene designation" value="GPI19"/>
</dbReference>
<dbReference type="VEuPathDB" id="FungiDB:YDR437W"/>
<dbReference type="eggNOG" id="KOG2257">
    <property type="taxonomic scope" value="Eukaryota"/>
</dbReference>
<dbReference type="HOGENOM" id="CLU_081616_4_0_1"/>
<dbReference type="InParanoid" id="Q04082"/>
<dbReference type="OMA" id="RYWIICI"/>
<dbReference type="OrthoDB" id="690928at2759"/>
<dbReference type="BioCyc" id="YEAST:G3O-29971-MONOMER"/>
<dbReference type="UniPathway" id="UPA00196"/>
<dbReference type="BioGRID-ORCS" id="852047">
    <property type="hits" value="9 hits in 10 CRISPR screens"/>
</dbReference>
<dbReference type="PRO" id="PR:Q04082"/>
<dbReference type="Proteomes" id="UP000002311">
    <property type="component" value="Chromosome IV"/>
</dbReference>
<dbReference type="RNAct" id="Q04082">
    <property type="molecule type" value="protein"/>
</dbReference>
<dbReference type="GO" id="GO:0005783">
    <property type="term" value="C:endoplasmic reticulum"/>
    <property type="evidence" value="ECO:0007005"/>
    <property type="project" value="SGD"/>
</dbReference>
<dbReference type="GO" id="GO:0005789">
    <property type="term" value="C:endoplasmic reticulum membrane"/>
    <property type="evidence" value="ECO:0000314"/>
    <property type="project" value="SGD"/>
</dbReference>
<dbReference type="GO" id="GO:0000506">
    <property type="term" value="C:glycosylphosphatidylinositol-N-acetylglucosaminyltransferase (GPI-GnT) complex"/>
    <property type="evidence" value="ECO:0000353"/>
    <property type="project" value="SGD"/>
</dbReference>
<dbReference type="GO" id="GO:0005635">
    <property type="term" value="C:nuclear envelope"/>
    <property type="evidence" value="ECO:0007005"/>
    <property type="project" value="SGD"/>
</dbReference>
<dbReference type="GO" id="GO:0017176">
    <property type="term" value="F:phosphatidylinositol N-acetylglucosaminyltransferase activity"/>
    <property type="evidence" value="ECO:0007669"/>
    <property type="project" value="UniProtKB-EC"/>
</dbReference>
<dbReference type="GO" id="GO:0031505">
    <property type="term" value="P:fungal-type cell wall organization"/>
    <property type="evidence" value="ECO:0000303"/>
    <property type="project" value="ComplexPortal"/>
</dbReference>
<dbReference type="GO" id="GO:0006506">
    <property type="term" value="P:GPI anchor biosynthetic process"/>
    <property type="evidence" value="ECO:0000315"/>
    <property type="project" value="SGD"/>
</dbReference>
<dbReference type="InterPro" id="IPR052263">
    <property type="entry name" value="GPI_Anchor_Biosynth"/>
</dbReference>
<dbReference type="InterPro" id="IPR013717">
    <property type="entry name" value="PIG-P"/>
</dbReference>
<dbReference type="InterPro" id="IPR016542">
    <property type="entry name" value="PIG-P_GPI19"/>
</dbReference>
<dbReference type="PANTHER" id="PTHR46346">
    <property type="entry name" value="PHOSPHATIDYLINOSITOL N-ACETYLGLUCOSAMINYLTRANSFERASE SUBUNIT P"/>
    <property type="match status" value="1"/>
</dbReference>
<dbReference type="PANTHER" id="PTHR46346:SF1">
    <property type="entry name" value="PHOSPHATIDYLINOSITOL N-ACETYLGLUCOSAMINYLTRANSFERASE SUBUNIT P"/>
    <property type="match status" value="1"/>
</dbReference>
<dbReference type="Pfam" id="PF08510">
    <property type="entry name" value="PIG-P"/>
    <property type="match status" value="1"/>
</dbReference>
<dbReference type="PIRSF" id="PIRSF008765">
    <property type="entry name" value="PIG-P_GPI19"/>
    <property type="match status" value="1"/>
</dbReference>
<feature type="chain" id="PRO_0000240380" description="Phosphatidylinositol N-acetylglucosaminyltransferase subunit GPI19">
    <location>
        <begin position="1"/>
        <end position="140"/>
    </location>
</feature>
<feature type="topological domain" description="Cytoplasmic" evidence="3">
    <location>
        <begin position="1"/>
        <end position="12"/>
    </location>
</feature>
<feature type="transmembrane region" description="Helical" evidence="1">
    <location>
        <begin position="13"/>
        <end position="33"/>
    </location>
</feature>
<feature type="topological domain" description="Lumenal" evidence="3">
    <location>
        <begin position="34"/>
        <end position="52"/>
    </location>
</feature>
<feature type="transmembrane region" description="Helical" evidence="1">
    <location>
        <begin position="53"/>
        <end position="73"/>
    </location>
</feature>
<feature type="topological domain" description="Cytoplasmic" evidence="3">
    <location>
        <begin position="74"/>
        <end position="140"/>
    </location>
</feature>
<name>GPI19_YEAST</name>
<proteinExistence type="evidence at protein level"/>
<keyword id="KW-0961">Cell wall biogenesis/degradation</keyword>
<keyword id="KW-0256">Endoplasmic reticulum</keyword>
<keyword id="KW-0337">GPI-anchor biosynthesis</keyword>
<keyword id="KW-0472">Membrane</keyword>
<keyword id="KW-1185">Reference proteome</keyword>
<keyword id="KW-0808">Transferase</keyword>
<keyword id="KW-0812">Transmembrane</keyword>
<keyword id="KW-1133">Transmembrane helix</keyword>
<reference key="1">
    <citation type="journal article" date="1997" name="Nature">
        <title>The nucleotide sequence of Saccharomyces cerevisiae chromosome IV.</title>
        <authorList>
            <person name="Jacq C."/>
            <person name="Alt-Moerbe J."/>
            <person name="Andre B."/>
            <person name="Arnold W."/>
            <person name="Bahr A."/>
            <person name="Ballesta J.P.G."/>
            <person name="Bargues M."/>
            <person name="Baron L."/>
            <person name="Becker A."/>
            <person name="Biteau N."/>
            <person name="Bloecker H."/>
            <person name="Blugeon C."/>
            <person name="Boskovic J."/>
            <person name="Brandt P."/>
            <person name="Brueckner M."/>
            <person name="Buitrago M.J."/>
            <person name="Coster F."/>
            <person name="Delaveau T."/>
            <person name="del Rey F."/>
            <person name="Dujon B."/>
            <person name="Eide L.G."/>
            <person name="Garcia-Cantalejo J.M."/>
            <person name="Goffeau A."/>
            <person name="Gomez-Peris A."/>
            <person name="Granotier C."/>
            <person name="Hanemann V."/>
            <person name="Hankeln T."/>
            <person name="Hoheisel J.D."/>
            <person name="Jaeger W."/>
            <person name="Jimenez A."/>
            <person name="Jonniaux J.-L."/>
            <person name="Kraemer C."/>
            <person name="Kuester H."/>
            <person name="Laamanen P."/>
            <person name="Legros Y."/>
            <person name="Louis E.J."/>
            <person name="Moeller-Rieker S."/>
            <person name="Monnet A."/>
            <person name="Moro M."/>
            <person name="Mueller-Auer S."/>
            <person name="Nussbaumer B."/>
            <person name="Paricio N."/>
            <person name="Paulin L."/>
            <person name="Perea J."/>
            <person name="Perez-Alonso M."/>
            <person name="Perez-Ortin J.E."/>
            <person name="Pohl T.M."/>
            <person name="Prydz H."/>
            <person name="Purnelle B."/>
            <person name="Rasmussen S.W."/>
            <person name="Remacha M.A."/>
            <person name="Revuelta J.L."/>
            <person name="Rieger M."/>
            <person name="Salom D."/>
            <person name="Saluz H.P."/>
            <person name="Saiz J.E."/>
            <person name="Saren A.-M."/>
            <person name="Schaefer M."/>
            <person name="Scharfe M."/>
            <person name="Schmidt E.R."/>
            <person name="Schneider C."/>
            <person name="Scholler P."/>
            <person name="Schwarz S."/>
            <person name="Soler-Mira A."/>
            <person name="Urrestarazu L.A."/>
            <person name="Verhasselt P."/>
            <person name="Vissers S."/>
            <person name="Voet M."/>
            <person name="Volckaert G."/>
            <person name="Wagner G."/>
            <person name="Wambutt R."/>
            <person name="Wedler E."/>
            <person name="Wedler H."/>
            <person name="Woelfl S."/>
            <person name="Harris D.E."/>
            <person name="Bowman S."/>
            <person name="Brown D."/>
            <person name="Churcher C.M."/>
            <person name="Connor R."/>
            <person name="Dedman K."/>
            <person name="Gentles S."/>
            <person name="Hamlin N."/>
            <person name="Hunt S."/>
            <person name="Jones L."/>
            <person name="McDonald S."/>
            <person name="Murphy L.D."/>
            <person name="Niblett D."/>
            <person name="Odell C."/>
            <person name="Oliver K."/>
            <person name="Rajandream M.A."/>
            <person name="Richards C."/>
            <person name="Shore L."/>
            <person name="Walsh S.V."/>
            <person name="Barrell B.G."/>
            <person name="Dietrich F.S."/>
            <person name="Mulligan J.T."/>
            <person name="Allen E."/>
            <person name="Araujo R."/>
            <person name="Aviles E."/>
            <person name="Berno A."/>
            <person name="Carpenter J."/>
            <person name="Chen E."/>
            <person name="Cherry J.M."/>
            <person name="Chung E."/>
            <person name="Duncan M."/>
            <person name="Hunicke-Smith S."/>
            <person name="Hyman R.W."/>
            <person name="Komp C."/>
            <person name="Lashkari D."/>
            <person name="Lew H."/>
            <person name="Lin D."/>
            <person name="Mosedale D."/>
            <person name="Nakahara K."/>
            <person name="Namath A."/>
            <person name="Oefner P."/>
            <person name="Oh C."/>
            <person name="Petel F.X."/>
            <person name="Roberts D."/>
            <person name="Schramm S."/>
            <person name="Schroeder M."/>
            <person name="Shogren T."/>
            <person name="Shroff N."/>
            <person name="Winant A."/>
            <person name="Yelton M.A."/>
            <person name="Botstein D."/>
            <person name="Davis R.W."/>
            <person name="Johnston M."/>
            <person name="Andrews S."/>
            <person name="Brinkman R."/>
            <person name="Cooper J."/>
            <person name="Ding H."/>
            <person name="Du Z."/>
            <person name="Favello A."/>
            <person name="Fulton L."/>
            <person name="Gattung S."/>
            <person name="Greco T."/>
            <person name="Hallsworth K."/>
            <person name="Hawkins J."/>
            <person name="Hillier L.W."/>
            <person name="Jier M."/>
            <person name="Johnson D."/>
            <person name="Johnston L."/>
            <person name="Kirsten J."/>
            <person name="Kucaba T."/>
            <person name="Langston Y."/>
            <person name="Latreille P."/>
            <person name="Le T."/>
            <person name="Mardis E."/>
            <person name="Menezes S."/>
            <person name="Miller N."/>
            <person name="Nhan M."/>
            <person name="Pauley A."/>
            <person name="Peluso D."/>
            <person name="Rifkin L."/>
            <person name="Riles L."/>
            <person name="Taich A."/>
            <person name="Trevaskis E."/>
            <person name="Vignati D."/>
            <person name="Wilcox L."/>
            <person name="Wohldman P."/>
            <person name="Vaudin M."/>
            <person name="Wilson R."/>
            <person name="Waterston R."/>
            <person name="Albermann K."/>
            <person name="Hani J."/>
            <person name="Heumann K."/>
            <person name="Kleine K."/>
            <person name="Mewes H.-W."/>
            <person name="Zollner A."/>
            <person name="Zaccaria P."/>
        </authorList>
    </citation>
    <scope>NUCLEOTIDE SEQUENCE [LARGE SCALE GENOMIC DNA]</scope>
    <source>
        <strain>ATCC 204508 / S288c</strain>
    </source>
</reference>
<reference key="2">
    <citation type="journal article" date="2014" name="G3 (Bethesda)">
        <title>The reference genome sequence of Saccharomyces cerevisiae: Then and now.</title>
        <authorList>
            <person name="Engel S.R."/>
            <person name="Dietrich F.S."/>
            <person name="Fisk D.G."/>
            <person name="Binkley G."/>
            <person name="Balakrishnan R."/>
            <person name="Costanzo M.C."/>
            <person name="Dwight S.S."/>
            <person name="Hitz B.C."/>
            <person name="Karra K."/>
            <person name="Nash R.S."/>
            <person name="Weng S."/>
            <person name="Wong E.D."/>
            <person name="Lloyd P."/>
            <person name="Skrzypek M.S."/>
            <person name="Miyasato S.R."/>
            <person name="Simison M."/>
            <person name="Cherry J.M."/>
        </authorList>
    </citation>
    <scope>GENOME REANNOTATION</scope>
    <source>
        <strain>ATCC 204508 / S288c</strain>
    </source>
</reference>
<reference key="3">
    <citation type="journal article" date="2003" name="Nature">
        <title>Global analysis of protein localization in budding yeast.</title>
        <authorList>
            <person name="Huh W.-K."/>
            <person name="Falvo J.V."/>
            <person name="Gerke L.C."/>
            <person name="Carroll A.S."/>
            <person name="Howson R.W."/>
            <person name="Weissman J.S."/>
            <person name="O'Shea E.K."/>
        </authorList>
    </citation>
    <scope>SUBCELLULAR LOCATION [LARGE SCALE ANALYSIS]</scope>
</reference>
<reference key="4">
    <citation type="journal article" date="2003" name="Nature">
        <title>Global analysis of protein expression in yeast.</title>
        <authorList>
            <person name="Ghaemmaghami S."/>
            <person name="Huh W.-K."/>
            <person name="Bower K."/>
            <person name="Howson R.W."/>
            <person name="Belle A."/>
            <person name="Dephoure N."/>
            <person name="O'Shea E.K."/>
            <person name="Weissman J.S."/>
        </authorList>
    </citation>
    <scope>LEVEL OF PROTEIN EXPRESSION [LARGE SCALE ANALYSIS]</scope>
</reference>
<reference key="5">
    <citation type="journal article" date="2005" name="Eukaryot. Cell">
        <title>Gpi19, the Saccharomyces cerevisiae homologue of mammalian PIG-P, is a subunit of the initial enzyme for glycosylphosphatidylinositol anchor biosynthesis.</title>
        <authorList>
            <person name="Newman H.A."/>
            <person name="Romeo M.J."/>
            <person name="Lewis S.E."/>
            <person name="Yan B.C."/>
            <person name="Orlean P."/>
            <person name="Levin D.E."/>
        </authorList>
    </citation>
    <scope>FUNCTION</scope>
    <scope>TOPOLOGY</scope>
    <scope>INTERACTION WITH GPI2</scope>
    <scope>IDENTIFICATION IN THE GPI-GLCNAC TRANSFERASE COMPLEX</scope>
</reference>
<comment type="function">
    <text evidence="3">Part of the complex catalyzing the transfer of N-acetylglucosamine from UDP-N-acetylglucosamine to phosphatidylinositol, the first step of GPI biosynthesis. Involved in cell wall biosynthesis.</text>
</comment>
<comment type="catalytic activity">
    <reaction>
        <text>a 1,2-diacyl-sn-glycero-3-phospho-(1D-myo-inositol) + UDP-N-acetyl-alpha-D-glucosamine = a 6-(N-acetyl-alpha-D-glucosaminyl)-1-(1,2-diacyl-sn-glycero-3-phospho)-1D-myo-inositol + UDP + H(+)</text>
        <dbReference type="Rhea" id="RHEA:14789"/>
        <dbReference type="ChEBI" id="CHEBI:15378"/>
        <dbReference type="ChEBI" id="CHEBI:57265"/>
        <dbReference type="ChEBI" id="CHEBI:57705"/>
        <dbReference type="ChEBI" id="CHEBI:57880"/>
        <dbReference type="ChEBI" id="CHEBI:58223"/>
        <dbReference type="EC" id="2.4.1.198"/>
    </reaction>
</comment>
<comment type="pathway">
    <text>Glycolipid biosynthesis; glycosylphosphatidylinositol-anchor biosynthesis.</text>
</comment>
<comment type="subunit">
    <text evidence="3 5">Component of the phosphatidylinositol N-acetylglucosaminyltransferase (GPI-GlcNAc transferase) complex composed of at least GPI1, GPI2, GPI3, GPI15, GPI19 and ERI1 (Probable). Interacts with GPI2 (PubMed:16278447).</text>
</comment>
<comment type="subcellular location">
    <subcellularLocation>
        <location evidence="4">Endoplasmic reticulum membrane</location>
        <topology evidence="4">Multi-pass membrane protein</topology>
    </subcellularLocation>
</comment>
<comment type="miscellaneous">
    <text evidence="2">Present with 752 molecules/cell in log phase SD medium.</text>
</comment>
<comment type="similarity">
    <text evidence="4">Belongs to the GPI19 family.</text>
</comment>
<sequence length="140" mass="16090">MYTKEYYWFSQYMIITSTLVLTIIWSILPSSLGEAAPKQFINTLLDIFPQRRWIITLESIMLMGMLCTYIGLLMYNEDTLTPPLDSLSTVTDAGGQLVIEDDPDVFVKKWAFKETSGIYDLSLMDACQLLYLYDNDHTST</sequence>
<accession>Q04082</accession>
<accession>D6VT64</accession>
<evidence type="ECO:0000255" key="1"/>
<evidence type="ECO:0000269" key="2">
    <source>
    </source>
</evidence>
<evidence type="ECO:0000269" key="3">
    <source>
    </source>
</evidence>
<evidence type="ECO:0000305" key="4"/>
<evidence type="ECO:0000305" key="5">
    <source>
    </source>
</evidence>
<gene>
    <name type="primary">GPI19</name>
    <name type="ordered locus">YDR437W</name>
    <name type="ORF">D9461.23</name>
</gene>
<protein>
    <recommendedName>
        <fullName>Phosphatidylinositol N-acetylglucosaminyltransferase subunit GPI19</fullName>
        <shortName>GPI-GlcNAc transferase complex subunit GPI19</shortName>
        <shortName>GPI-GnT subunit GPI19</shortName>
        <ecNumber>2.4.1.198</ecNumber>
    </recommendedName>
</protein>